<gene>
    <name evidence="1" type="primary">azoR</name>
    <name type="ordered locus">MG333</name>
</gene>
<comment type="function">
    <text evidence="1">Quinone reductase that provides resistance to thiol-specific stress caused by electrophilic quinones.</text>
</comment>
<comment type="function">
    <text evidence="1">Also exhibits azoreductase activity. Catalyzes the reductive cleavage of the azo bond in aromatic azo compounds to the corresponding amines.</text>
</comment>
<comment type="catalytic activity">
    <reaction evidence="1">
        <text>2 a quinone + NADH + H(+) = 2 a 1,4-benzosemiquinone + NAD(+)</text>
        <dbReference type="Rhea" id="RHEA:65952"/>
        <dbReference type="ChEBI" id="CHEBI:15378"/>
        <dbReference type="ChEBI" id="CHEBI:57540"/>
        <dbReference type="ChEBI" id="CHEBI:57945"/>
        <dbReference type="ChEBI" id="CHEBI:132124"/>
        <dbReference type="ChEBI" id="CHEBI:134225"/>
    </reaction>
</comment>
<comment type="catalytic activity">
    <reaction evidence="1">
        <text>N,N-dimethyl-1,4-phenylenediamine + anthranilate + 2 NAD(+) = 2-(4-dimethylaminophenyl)diazenylbenzoate + 2 NADH + 2 H(+)</text>
        <dbReference type="Rhea" id="RHEA:55872"/>
        <dbReference type="ChEBI" id="CHEBI:15378"/>
        <dbReference type="ChEBI" id="CHEBI:15783"/>
        <dbReference type="ChEBI" id="CHEBI:16567"/>
        <dbReference type="ChEBI" id="CHEBI:57540"/>
        <dbReference type="ChEBI" id="CHEBI:57945"/>
        <dbReference type="ChEBI" id="CHEBI:71579"/>
        <dbReference type="EC" id="1.7.1.17"/>
    </reaction>
</comment>
<comment type="cofactor">
    <cofactor evidence="1">
        <name>FMN</name>
        <dbReference type="ChEBI" id="CHEBI:58210"/>
    </cofactor>
    <text evidence="1">Binds 1 FMN per subunit.</text>
</comment>
<comment type="subunit">
    <text evidence="1">Homodimer.</text>
</comment>
<comment type="similarity">
    <text evidence="1">Belongs to the azoreductase type 1 family.</text>
</comment>
<comment type="sequence caution" evidence="2">
    <conflict type="erroneous initiation">
        <sequence resource="EMBL-CDS" id="AAD12538"/>
    </conflict>
</comment>
<evidence type="ECO:0000255" key="1">
    <source>
        <dbReference type="HAMAP-Rule" id="MF_01216"/>
    </source>
</evidence>
<evidence type="ECO:0000305" key="2"/>
<dbReference type="EC" id="1.6.5.-" evidence="1"/>
<dbReference type="EC" id="1.7.1.17" evidence="1"/>
<dbReference type="EMBL" id="L43967">
    <property type="status" value="NOT_ANNOTATED_CDS"/>
    <property type="molecule type" value="Genomic_DNA"/>
</dbReference>
<dbReference type="EMBL" id="U02249">
    <property type="protein sequence ID" value="AAD12538.1"/>
    <property type="status" value="ALT_INIT"/>
    <property type="molecule type" value="Genomic_DNA"/>
</dbReference>
<dbReference type="RefSeq" id="WP_009885986.1">
    <property type="nucleotide sequence ID" value="NC_000908.2"/>
</dbReference>
<dbReference type="SMR" id="P47575"/>
<dbReference type="FunCoup" id="P47575">
    <property type="interactions" value="4"/>
</dbReference>
<dbReference type="GeneID" id="88282506"/>
<dbReference type="InParanoid" id="P47575"/>
<dbReference type="OrthoDB" id="9805013at2"/>
<dbReference type="BioCyc" id="MGEN243273:G1GJ2-415-MONOMER"/>
<dbReference type="Proteomes" id="UP000000807">
    <property type="component" value="Chromosome"/>
</dbReference>
<dbReference type="GO" id="GO:0009055">
    <property type="term" value="F:electron transfer activity"/>
    <property type="evidence" value="ECO:0007669"/>
    <property type="project" value="UniProtKB-UniRule"/>
</dbReference>
<dbReference type="GO" id="GO:0010181">
    <property type="term" value="F:FMN binding"/>
    <property type="evidence" value="ECO:0007669"/>
    <property type="project" value="UniProtKB-UniRule"/>
</dbReference>
<dbReference type="GO" id="GO:0016652">
    <property type="term" value="F:oxidoreductase activity, acting on NAD(P)H as acceptor"/>
    <property type="evidence" value="ECO:0007669"/>
    <property type="project" value="UniProtKB-UniRule"/>
</dbReference>
<dbReference type="GO" id="GO:0016655">
    <property type="term" value="F:oxidoreductase activity, acting on NAD(P)H, quinone or similar compound as acceptor"/>
    <property type="evidence" value="ECO:0007669"/>
    <property type="project" value="InterPro"/>
</dbReference>
<dbReference type="Gene3D" id="3.40.50.360">
    <property type="match status" value="1"/>
</dbReference>
<dbReference type="HAMAP" id="MF_01216">
    <property type="entry name" value="Azoreductase_type1"/>
    <property type="match status" value="1"/>
</dbReference>
<dbReference type="InterPro" id="IPR003680">
    <property type="entry name" value="Flavodoxin_fold"/>
</dbReference>
<dbReference type="InterPro" id="IPR029039">
    <property type="entry name" value="Flavoprotein-like_sf"/>
</dbReference>
<dbReference type="InterPro" id="IPR050104">
    <property type="entry name" value="FMN-dep_NADH:Q_OxRdtase_AzoR1"/>
</dbReference>
<dbReference type="InterPro" id="IPR023048">
    <property type="entry name" value="NADH:quinone_OxRdtase_FMN_depd"/>
</dbReference>
<dbReference type="NCBIfam" id="NF002370">
    <property type="entry name" value="PRK01355.1"/>
    <property type="match status" value="1"/>
</dbReference>
<dbReference type="PANTHER" id="PTHR43741">
    <property type="entry name" value="FMN-DEPENDENT NADH-AZOREDUCTASE 1"/>
    <property type="match status" value="1"/>
</dbReference>
<dbReference type="PANTHER" id="PTHR43741:SF4">
    <property type="entry name" value="FMN-DEPENDENT NADH:QUINONE OXIDOREDUCTASE"/>
    <property type="match status" value="1"/>
</dbReference>
<dbReference type="Pfam" id="PF02525">
    <property type="entry name" value="Flavodoxin_2"/>
    <property type="match status" value="1"/>
</dbReference>
<dbReference type="SUPFAM" id="SSF52218">
    <property type="entry name" value="Flavoproteins"/>
    <property type="match status" value="1"/>
</dbReference>
<reference key="1">
    <citation type="journal article" date="1995" name="Science">
        <title>The minimal gene complement of Mycoplasma genitalium.</title>
        <authorList>
            <person name="Fraser C.M."/>
            <person name="Gocayne J.D."/>
            <person name="White O."/>
            <person name="Adams M.D."/>
            <person name="Clayton R.A."/>
            <person name="Fleischmann R.D."/>
            <person name="Bult C.J."/>
            <person name="Kerlavage A.R."/>
            <person name="Sutton G.G."/>
            <person name="Kelley J.M."/>
            <person name="Fritchman J.L."/>
            <person name="Weidman J.F."/>
            <person name="Small K.V."/>
            <person name="Sandusky M."/>
            <person name="Fuhrmann J.L."/>
            <person name="Nguyen D.T."/>
            <person name="Utterback T.R."/>
            <person name="Saudek D.M."/>
            <person name="Phillips C.A."/>
            <person name="Merrick J.M."/>
            <person name="Tomb J.-F."/>
            <person name="Dougherty B.A."/>
            <person name="Bott K.F."/>
            <person name="Hu P.-C."/>
            <person name="Lucier T.S."/>
            <person name="Peterson S.N."/>
            <person name="Smith H.O."/>
            <person name="Hutchison C.A. III"/>
            <person name="Venter J.C."/>
        </authorList>
    </citation>
    <scope>NUCLEOTIDE SEQUENCE [LARGE SCALE GENOMIC DNA]</scope>
    <source>
        <strain>ATCC 33530 / DSM 19775 / NCTC 10195 / G37</strain>
    </source>
</reference>
<reference key="2">
    <citation type="submission" date="2005-09" db="EMBL/GenBank/DDBJ databases">
        <authorList>
            <person name="Fraser C.M."/>
            <person name="Gocayne J.D."/>
            <person name="White O."/>
            <person name="Adams M.D."/>
            <person name="Clayton R.A."/>
            <person name="Fleischmann R.D."/>
            <person name="Bult C.J."/>
            <person name="Kerlavage A.R."/>
            <person name="Sutton G.G."/>
            <person name="Kelley J.M."/>
            <person name="Fritchman J.L."/>
            <person name="Weidman J.F."/>
            <person name="Small K.V."/>
            <person name="Sandusky M."/>
            <person name="Fuhrmann J.L."/>
            <person name="Nguyen D.T."/>
            <person name="Utterback T.R."/>
            <person name="Saudek D.M."/>
            <person name="Phillips C.A."/>
            <person name="Merrick J.M."/>
            <person name="Tomb J.-F."/>
            <person name="Dougherty B.A."/>
            <person name="Bott K.F."/>
            <person name="Hu P.-C."/>
            <person name="Lucier T.S."/>
            <person name="Peterson S.N."/>
            <person name="Smith H.O."/>
            <person name="Hutchison C.A. III"/>
            <person name="Venter J.C."/>
        </authorList>
    </citation>
    <scope>SEQUENCE REVISION</scope>
</reference>
<reference key="3">
    <citation type="journal article" date="1993" name="J. Bacteriol.">
        <title>A survey of the Mycoplasma genitalium genome by using random sequencing.</title>
        <authorList>
            <person name="Peterson S.N."/>
            <person name="Hu P.-C."/>
            <person name="Bott K.F."/>
            <person name="Hutchison C.A. III"/>
        </authorList>
    </citation>
    <scope>NUCLEOTIDE SEQUENCE [GENOMIC DNA] OF 1-47</scope>
    <source>
        <strain>ATCC 33530 / DSM 19775 / NCTC 10195 / G37</strain>
    </source>
</reference>
<proteinExistence type="inferred from homology"/>
<keyword id="KW-0285">Flavoprotein</keyword>
<keyword id="KW-0288">FMN</keyword>
<keyword id="KW-0520">NAD</keyword>
<keyword id="KW-0560">Oxidoreductase</keyword>
<keyword id="KW-1185">Reference proteome</keyword>
<sequence>MKKVIIVDASVTPSGSYTHLLLDRFLQTYKKQNSSVEFIDWNLNELPVGKISYNTQNASNFFSFENSDYYIDALKTAYGIVILAPMTNFNYPASLKNFIDHVFVANKTFQDKYVTKGASKGLLTNLKVVVLASQGAPLGWYPWADHVSNLKGLFGFAGVTHFESVLIDDTKILYKDKNKQEVVDLFAHKVDQVANNF</sequence>
<protein>
    <recommendedName>
        <fullName evidence="1">FMN-dependent NADH:quinone oxidoreductase</fullName>
        <ecNumber evidence="1">1.6.5.-</ecNumber>
    </recommendedName>
    <alternativeName>
        <fullName evidence="1">Azo-dye reductase</fullName>
    </alternativeName>
    <alternativeName>
        <fullName evidence="1">FMN-dependent NADH-azo compound oxidoreductase</fullName>
    </alternativeName>
    <alternativeName>
        <fullName evidence="1">FMN-dependent NADH-azoreductase</fullName>
        <ecNumber evidence="1">1.7.1.17</ecNumber>
    </alternativeName>
</protein>
<organism>
    <name type="scientific">Mycoplasma genitalium (strain ATCC 33530 / DSM 19775 / NCTC 10195 / G37)</name>
    <name type="common">Mycoplasmoides genitalium</name>
    <dbReference type="NCBI Taxonomy" id="243273"/>
    <lineage>
        <taxon>Bacteria</taxon>
        <taxon>Bacillati</taxon>
        <taxon>Mycoplasmatota</taxon>
        <taxon>Mycoplasmoidales</taxon>
        <taxon>Mycoplasmoidaceae</taxon>
        <taxon>Mycoplasmoides</taxon>
    </lineage>
</organism>
<name>AZOR_MYCGE</name>
<feature type="chain" id="PRO_0000166344" description="FMN-dependent NADH:quinone oxidoreductase">
    <location>
        <begin position="1"/>
        <end position="197"/>
    </location>
</feature>
<feature type="binding site" evidence="1">
    <location>
        <position position="10"/>
    </location>
    <ligand>
        <name>FMN</name>
        <dbReference type="ChEBI" id="CHEBI:58210"/>
    </ligand>
</feature>
<feature type="sequence conflict" description="In Ref. 3; AAD12538." evidence="2" ref="3">
    <original>NELP</original>
    <variation>MNYQ</variation>
    <location>
        <begin position="44"/>
        <end position="47"/>
    </location>
</feature>
<accession>P47575</accession>
<accession>Q49357</accession>